<protein>
    <recommendedName>
        <fullName evidence="1">Protein ApaG</fullName>
    </recommendedName>
</protein>
<name>APAG_SODGM</name>
<evidence type="ECO:0000255" key="1">
    <source>
        <dbReference type="HAMAP-Rule" id="MF_00791"/>
    </source>
</evidence>
<accession>Q2NVX7</accession>
<dbReference type="EMBL" id="AP008232">
    <property type="protein sequence ID" value="BAE73698.1"/>
    <property type="molecule type" value="Genomic_DNA"/>
</dbReference>
<dbReference type="RefSeq" id="WP_011410286.1">
    <property type="nucleotide sequence ID" value="NC_007712.1"/>
</dbReference>
<dbReference type="SMR" id="Q2NVX7"/>
<dbReference type="STRING" id="343509.SG0423"/>
<dbReference type="KEGG" id="sgl:SG0423"/>
<dbReference type="eggNOG" id="COG2967">
    <property type="taxonomic scope" value="Bacteria"/>
</dbReference>
<dbReference type="HOGENOM" id="CLU_128074_0_0_6"/>
<dbReference type="OrthoDB" id="9795226at2"/>
<dbReference type="BioCyc" id="SGLO343509:SGP1_RS03870-MONOMER"/>
<dbReference type="Proteomes" id="UP000001932">
    <property type="component" value="Chromosome"/>
</dbReference>
<dbReference type="GO" id="GO:0070987">
    <property type="term" value="P:error-free translesion synthesis"/>
    <property type="evidence" value="ECO:0007669"/>
    <property type="project" value="TreeGrafter"/>
</dbReference>
<dbReference type="Gene3D" id="2.60.40.1470">
    <property type="entry name" value="ApaG domain"/>
    <property type="match status" value="1"/>
</dbReference>
<dbReference type="HAMAP" id="MF_00791">
    <property type="entry name" value="ApaG"/>
    <property type="match status" value="1"/>
</dbReference>
<dbReference type="InterPro" id="IPR007474">
    <property type="entry name" value="ApaG_domain"/>
</dbReference>
<dbReference type="InterPro" id="IPR036767">
    <property type="entry name" value="ApaG_sf"/>
</dbReference>
<dbReference type="InterPro" id="IPR023065">
    <property type="entry name" value="Uncharacterised_ApaG"/>
</dbReference>
<dbReference type="NCBIfam" id="NF003967">
    <property type="entry name" value="PRK05461.1"/>
    <property type="match status" value="1"/>
</dbReference>
<dbReference type="PANTHER" id="PTHR14289">
    <property type="entry name" value="F-BOX ONLY PROTEIN 3"/>
    <property type="match status" value="1"/>
</dbReference>
<dbReference type="PANTHER" id="PTHR14289:SF16">
    <property type="entry name" value="POLYMERASE DELTA-INTERACTING PROTEIN 2"/>
    <property type="match status" value="1"/>
</dbReference>
<dbReference type="Pfam" id="PF04379">
    <property type="entry name" value="DUF525"/>
    <property type="match status" value="1"/>
</dbReference>
<dbReference type="SUPFAM" id="SSF110069">
    <property type="entry name" value="ApaG-like"/>
    <property type="match status" value="1"/>
</dbReference>
<dbReference type="PROSITE" id="PS51087">
    <property type="entry name" value="APAG"/>
    <property type="match status" value="1"/>
</dbReference>
<gene>
    <name evidence="1" type="primary">apaG</name>
    <name type="ordered locus">SG0423</name>
</gene>
<proteinExistence type="inferred from homology"/>
<reference key="1">
    <citation type="journal article" date="2006" name="Genome Res.">
        <title>Massive genome erosion and functional adaptations provide insights into the symbiotic lifestyle of Sodalis glossinidius in the tsetse host.</title>
        <authorList>
            <person name="Toh H."/>
            <person name="Weiss B.L."/>
            <person name="Perkin S.A.H."/>
            <person name="Yamashita A."/>
            <person name="Oshima K."/>
            <person name="Hattori M."/>
            <person name="Aksoy S."/>
        </authorList>
    </citation>
    <scope>NUCLEOTIDE SEQUENCE [LARGE SCALE GENOMIC DNA]</scope>
    <source>
        <strain>morsitans</strain>
    </source>
</reference>
<organism>
    <name type="scientific">Sodalis glossinidius (strain morsitans)</name>
    <dbReference type="NCBI Taxonomy" id="343509"/>
    <lineage>
        <taxon>Bacteria</taxon>
        <taxon>Pseudomonadati</taxon>
        <taxon>Pseudomonadota</taxon>
        <taxon>Gammaproteobacteria</taxon>
        <taxon>Enterobacterales</taxon>
        <taxon>Bruguierivoracaceae</taxon>
        <taxon>Sodalis</taxon>
    </lineage>
</organism>
<feature type="chain" id="PRO_1000083664" description="Protein ApaG">
    <location>
        <begin position="1"/>
        <end position="125"/>
    </location>
</feature>
<feature type="domain" description="ApaG" evidence="1">
    <location>
        <begin position="1"/>
        <end position="125"/>
    </location>
</feature>
<sequence>MINSPRVCVQVQSMYIETQSQPESDRYVFAYTITLRNLGRHPVQLIGRYWLITNANGQETEVQGEGVVGEKPRILPGGEFQYTSGAVLETPLGTMQGHYDMVDDQGQGFHVAIPVFRLAIPSLIN</sequence>